<dbReference type="EMBL" id="CU928162">
    <property type="protein sequence ID" value="CAR10032.2"/>
    <property type="molecule type" value="Genomic_DNA"/>
</dbReference>
<dbReference type="RefSeq" id="WP_000051841.1">
    <property type="nucleotide sequence ID" value="NC_011745.1"/>
</dbReference>
<dbReference type="GeneID" id="93778743"/>
<dbReference type="KEGG" id="ecq:ECED1_3892"/>
<dbReference type="HOGENOM" id="CLU_188292_0_0_6"/>
<dbReference type="Proteomes" id="UP000000748">
    <property type="component" value="Chromosome"/>
</dbReference>
<dbReference type="GO" id="GO:0005886">
    <property type="term" value="C:plasma membrane"/>
    <property type="evidence" value="ECO:0007669"/>
    <property type="project" value="UniProtKB-SubCell"/>
</dbReference>
<dbReference type="HAMAP" id="MF_01546">
    <property type="entry name" value="AaeX"/>
    <property type="match status" value="1"/>
</dbReference>
<dbReference type="InterPro" id="IPR012451">
    <property type="entry name" value="DUF1656"/>
</dbReference>
<dbReference type="NCBIfam" id="NF008615">
    <property type="entry name" value="PRK11594.1"/>
    <property type="match status" value="1"/>
</dbReference>
<dbReference type="Pfam" id="PF07869">
    <property type="entry name" value="DUF1656"/>
    <property type="match status" value="1"/>
</dbReference>
<sequence>MSLFPVIVVFGLSFPPIFFELLLSLAIFWLVRRVLVPTGIYDFVWHPALFNTALYCCLFYLISRLFV</sequence>
<keyword id="KW-1003">Cell membrane</keyword>
<keyword id="KW-0472">Membrane</keyword>
<keyword id="KW-0812">Transmembrane</keyword>
<keyword id="KW-1133">Transmembrane helix</keyword>
<gene>
    <name evidence="1" type="primary">aaeX</name>
    <name type="ordered locus">ECED1_3892</name>
</gene>
<accession>B7N114</accession>
<evidence type="ECO:0000255" key="1">
    <source>
        <dbReference type="HAMAP-Rule" id="MF_01546"/>
    </source>
</evidence>
<comment type="subcellular location">
    <subcellularLocation>
        <location evidence="1">Cell membrane</location>
        <topology evidence="1">Multi-pass membrane protein</topology>
    </subcellularLocation>
</comment>
<comment type="induction">
    <text evidence="1">Positively coregulated with aaeA and aaeB by AaeR.</text>
</comment>
<comment type="similarity">
    <text evidence="1">Belongs to the AaeX family.</text>
</comment>
<reference key="1">
    <citation type="journal article" date="2009" name="PLoS Genet.">
        <title>Organised genome dynamics in the Escherichia coli species results in highly diverse adaptive paths.</title>
        <authorList>
            <person name="Touchon M."/>
            <person name="Hoede C."/>
            <person name="Tenaillon O."/>
            <person name="Barbe V."/>
            <person name="Baeriswyl S."/>
            <person name="Bidet P."/>
            <person name="Bingen E."/>
            <person name="Bonacorsi S."/>
            <person name="Bouchier C."/>
            <person name="Bouvet O."/>
            <person name="Calteau A."/>
            <person name="Chiapello H."/>
            <person name="Clermont O."/>
            <person name="Cruveiller S."/>
            <person name="Danchin A."/>
            <person name="Diard M."/>
            <person name="Dossat C."/>
            <person name="Karoui M.E."/>
            <person name="Frapy E."/>
            <person name="Garry L."/>
            <person name="Ghigo J.M."/>
            <person name="Gilles A.M."/>
            <person name="Johnson J."/>
            <person name="Le Bouguenec C."/>
            <person name="Lescat M."/>
            <person name="Mangenot S."/>
            <person name="Martinez-Jehanne V."/>
            <person name="Matic I."/>
            <person name="Nassif X."/>
            <person name="Oztas S."/>
            <person name="Petit M.A."/>
            <person name="Pichon C."/>
            <person name="Rouy Z."/>
            <person name="Ruf C.S."/>
            <person name="Schneider D."/>
            <person name="Tourret J."/>
            <person name="Vacherie B."/>
            <person name="Vallenet D."/>
            <person name="Medigue C."/>
            <person name="Rocha E.P.C."/>
            <person name="Denamur E."/>
        </authorList>
    </citation>
    <scope>NUCLEOTIDE SEQUENCE [LARGE SCALE GENOMIC DNA]</scope>
    <source>
        <strain>ED1a</strain>
    </source>
</reference>
<organism>
    <name type="scientific">Escherichia coli O81 (strain ED1a)</name>
    <dbReference type="NCBI Taxonomy" id="585397"/>
    <lineage>
        <taxon>Bacteria</taxon>
        <taxon>Pseudomonadati</taxon>
        <taxon>Pseudomonadota</taxon>
        <taxon>Gammaproteobacteria</taxon>
        <taxon>Enterobacterales</taxon>
        <taxon>Enterobacteriaceae</taxon>
        <taxon>Escherichia</taxon>
    </lineage>
</organism>
<protein>
    <recommendedName>
        <fullName evidence="1">Protein AaeX</fullName>
    </recommendedName>
</protein>
<feature type="chain" id="PRO_1000185285" description="Protein AaeX">
    <location>
        <begin position="1"/>
        <end position="67"/>
    </location>
</feature>
<feature type="transmembrane region" description="Helical" evidence="1">
    <location>
        <begin position="3"/>
        <end position="23"/>
    </location>
</feature>
<feature type="transmembrane region" description="Helical" evidence="1">
    <location>
        <begin position="43"/>
        <end position="63"/>
    </location>
</feature>
<name>AAEX_ECO81</name>
<proteinExistence type="inferred from homology"/>